<accession>P75299</accession>
<name>Y486_MYCPN</name>
<gene>
    <name type="ordered locus">MPN_486</name>
    <name type="ORF">MP356</name>
    <name type="ORF">P02_orf147</name>
</gene>
<sequence>MAIFARETMDLIATASFPSIKKLSSGFWLDLFESTLTSGNELVLLPPTRYSYWSIMAVANPTPLKAPRRLDLVTKSLLAAPLLFHLVCQSNNPVREDVLDCWVWPFFCSGNTALMKSPKFWALLGVGSKVVLPWLCPLLGSRNAGKA</sequence>
<reference key="1">
    <citation type="journal article" date="1996" name="Nucleic Acids Res.">
        <title>Complete sequence analysis of the genome of the bacterium Mycoplasma pneumoniae.</title>
        <authorList>
            <person name="Himmelreich R."/>
            <person name="Hilbert H."/>
            <person name="Plagens H."/>
            <person name="Pirkl E."/>
            <person name="Li B.-C."/>
            <person name="Herrmann R."/>
        </authorList>
    </citation>
    <scope>NUCLEOTIDE SEQUENCE [LARGE SCALE GENOMIC DNA]</scope>
    <source>
        <strain>ATCC 29342 / M129 / Subtype 1</strain>
    </source>
</reference>
<keyword id="KW-1185">Reference proteome</keyword>
<dbReference type="EMBL" id="U00089">
    <property type="protein sequence ID" value="AAB96004.1"/>
    <property type="molecule type" value="Genomic_DNA"/>
</dbReference>
<dbReference type="PIR" id="S73682">
    <property type="entry name" value="S73682"/>
</dbReference>
<dbReference type="IntAct" id="P75299">
    <property type="interactions" value="1"/>
</dbReference>
<dbReference type="STRING" id="272634.MPN_486"/>
<dbReference type="EnsemblBacteria" id="AAB96004">
    <property type="protein sequence ID" value="AAB96004"/>
    <property type="gene ID" value="MPN_486"/>
</dbReference>
<dbReference type="KEGG" id="mpn:MPN_486"/>
<dbReference type="HOGENOM" id="CLU_1766005_0_0_14"/>
<dbReference type="Proteomes" id="UP000000808">
    <property type="component" value="Chromosome"/>
</dbReference>
<feature type="chain" id="PRO_0000210686" description="Uncharacterized protein MPN_486">
    <location>
        <begin position="1"/>
        <end position="147"/>
    </location>
</feature>
<protein>
    <recommendedName>
        <fullName>Uncharacterized protein MPN_486</fullName>
    </recommendedName>
</protein>
<proteinExistence type="predicted"/>
<organism>
    <name type="scientific">Mycoplasma pneumoniae (strain ATCC 29342 / M129 / Subtype 1)</name>
    <name type="common">Mycoplasmoides pneumoniae</name>
    <dbReference type="NCBI Taxonomy" id="272634"/>
    <lineage>
        <taxon>Bacteria</taxon>
        <taxon>Bacillati</taxon>
        <taxon>Mycoplasmatota</taxon>
        <taxon>Mycoplasmoidales</taxon>
        <taxon>Mycoplasmoidaceae</taxon>
        <taxon>Mycoplasmoides</taxon>
    </lineage>
</organism>